<comment type="function">
    <text evidence="5">Possible ligand of InR/insulin-like receptor.</text>
</comment>
<comment type="subunit">
    <text evidence="1">Heterodimer of a B chain and an A chain linked by two disulfide bonds.</text>
</comment>
<comment type="subcellular location">
    <subcellularLocation>
        <location evidence="5">Secreted</location>
    </subcellularLocation>
</comment>
<comment type="tissue specificity">
    <text evidence="4">Expressed at a high level in the embryonic mesoderm, with expression continuing after gastrulation and reducing from stage 12 onwards. Highly expressed in the embryonic anterior midgut rudiment and larval midgut.</text>
</comment>
<comment type="developmental stage">
    <text evidence="4">Expressed in the embryo (beginning at the blastoderm stage), and in the larva.</text>
</comment>
<comment type="similarity">
    <text evidence="5">Belongs to the insulin family.</text>
</comment>
<name>INSL4_DROME</name>
<feature type="signal peptide" evidence="2">
    <location>
        <begin position="1"/>
        <end position="26"/>
    </location>
</feature>
<feature type="chain" id="PRO_0000016197" description="Insulin-like peptide 4">
    <location>
        <begin position="27"/>
        <end position="134"/>
    </location>
</feature>
<feature type="peptide" id="PRO_0000016198" description="Insulin-like peptide 4 B chain" evidence="2">
    <location>
        <begin position="27"/>
        <end position="48"/>
    </location>
</feature>
<feature type="propeptide" id="PRO_0000016199" description="Connecting peptide" evidence="2">
    <location>
        <begin position="54"/>
        <end position="108"/>
    </location>
</feature>
<feature type="peptide" id="PRO_0000016200" description="Insulin-like peptide 4 A chain" evidence="2">
    <location>
        <begin position="115"/>
        <end position="134"/>
    </location>
</feature>
<feature type="region of interest" description="Disordered" evidence="3">
    <location>
        <begin position="72"/>
        <end position="107"/>
    </location>
</feature>
<feature type="compositionally biased region" description="Basic and acidic residues" evidence="3">
    <location>
        <begin position="81"/>
        <end position="96"/>
    </location>
</feature>
<feature type="disulfide bond" description="Interchain (between B and A chains)" evidence="1">
    <location>
        <begin position="31"/>
        <end position="120"/>
    </location>
</feature>
<feature type="disulfide bond" description="Interchain (between B and A chains)" evidence="1">
    <location>
        <begin position="43"/>
        <end position="133"/>
    </location>
</feature>
<feature type="disulfide bond" evidence="1">
    <location>
        <begin position="119"/>
        <end position="124"/>
    </location>
</feature>
<accession>Q9VT53</accession>
<proteinExistence type="evidence at transcript level"/>
<keyword id="KW-0165">Cleavage on pair of basic residues</keyword>
<keyword id="KW-1015">Disulfide bond</keyword>
<keyword id="KW-1185">Reference proteome</keyword>
<keyword id="KW-0964">Secreted</keyword>
<keyword id="KW-0732">Signal</keyword>
<reference key="1">
    <citation type="journal article" date="2000" name="Science">
        <title>The genome sequence of Drosophila melanogaster.</title>
        <authorList>
            <person name="Adams M.D."/>
            <person name="Celniker S.E."/>
            <person name="Holt R.A."/>
            <person name="Evans C.A."/>
            <person name="Gocayne J.D."/>
            <person name="Amanatides P.G."/>
            <person name="Scherer S.E."/>
            <person name="Li P.W."/>
            <person name="Hoskins R.A."/>
            <person name="Galle R.F."/>
            <person name="George R.A."/>
            <person name="Lewis S.E."/>
            <person name="Richards S."/>
            <person name="Ashburner M."/>
            <person name="Henderson S.N."/>
            <person name="Sutton G.G."/>
            <person name="Wortman J.R."/>
            <person name="Yandell M.D."/>
            <person name="Zhang Q."/>
            <person name="Chen L.X."/>
            <person name="Brandon R.C."/>
            <person name="Rogers Y.-H.C."/>
            <person name="Blazej R.G."/>
            <person name="Champe M."/>
            <person name="Pfeiffer B.D."/>
            <person name="Wan K.H."/>
            <person name="Doyle C."/>
            <person name="Baxter E.G."/>
            <person name="Helt G."/>
            <person name="Nelson C.R."/>
            <person name="Miklos G.L.G."/>
            <person name="Abril J.F."/>
            <person name="Agbayani A."/>
            <person name="An H.-J."/>
            <person name="Andrews-Pfannkoch C."/>
            <person name="Baldwin D."/>
            <person name="Ballew R.M."/>
            <person name="Basu A."/>
            <person name="Baxendale J."/>
            <person name="Bayraktaroglu L."/>
            <person name="Beasley E.M."/>
            <person name="Beeson K.Y."/>
            <person name="Benos P.V."/>
            <person name="Berman B.P."/>
            <person name="Bhandari D."/>
            <person name="Bolshakov S."/>
            <person name="Borkova D."/>
            <person name="Botchan M.R."/>
            <person name="Bouck J."/>
            <person name="Brokstein P."/>
            <person name="Brottier P."/>
            <person name="Burtis K.C."/>
            <person name="Busam D.A."/>
            <person name="Butler H."/>
            <person name="Cadieu E."/>
            <person name="Center A."/>
            <person name="Chandra I."/>
            <person name="Cherry J.M."/>
            <person name="Cawley S."/>
            <person name="Dahlke C."/>
            <person name="Davenport L.B."/>
            <person name="Davies P."/>
            <person name="de Pablos B."/>
            <person name="Delcher A."/>
            <person name="Deng Z."/>
            <person name="Mays A.D."/>
            <person name="Dew I."/>
            <person name="Dietz S.M."/>
            <person name="Dodson K."/>
            <person name="Doup L.E."/>
            <person name="Downes M."/>
            <person name="Dugan-Rocha S."/>
            <person name="Dunkov B.C."/>
            <person name="Dunn P."/>
            <person name="Durbin K.J."/>
            <person name="Evangelista C.C."/>
            <person name="Ferraz C."/>
            <person name="Ferriera S."/>
            <person name="Fleischmann W."/>
            <person name="Fosler C."/>
            <person name="Gabrielian A.E."/>
            <person name="Garg N.S."/>
            <person name="Gelbart W.M."/>
            <person name="Glasser K."/>
            <person name="Glodek A."/>
            <person name="Gong F."/>
            <person name="Gorrell J.H."/>
            <person name="Gu Z."/>
            <person name="Guan P."/>
            <person name="Harris M."/>
            <person name="Harris N.L."/>
            <person name="Harvey D.A."/>
            <person name="Heiman T.J."/>
            <person name="Hernandez J.R."/>
            <person name="Houck J."/>
            <person name="Hostin D."/>
            <person name="Houston K.A."/>
            <person name="Howland T.J."/>
            <person name="Wei M.-H."/>
            <person name="Ibegwam C."/>
            <person name="Jalali M."/>
            <person name="Kalush F."/>
            <person name="Karpen G.H."/>
            <person name="Ke Z."/>
            <person name="Kennison J.A."/>
            <person name="Ketchum K.A."/>
            <person name="Kimmel B.E."/>
            <person name="Kodira C.D."/>
            <person name="Kraft C.L."/>
            <person name="Kravitz S."/>
            <person name="Kulp D."/>
            <person name="Lai Z."/>
            <person name="Lasko P."/>
            <person name="Lei Y."/>
            <person name="Levitsky A.A."/>
            <person name="Li J.H."/>
            <person name="Li Z."/>
            <person name="Liang Y."/>
            <person name="Lin X."/>
            <person name="Liu X."/>
            <person name="Mattei B."/>
            <person name="McIntosh T.C."/>
            <person name="McLeod M.P."/>
            <person name="McPherson D."/>
            <person name="Merkulov G."/>
            <person name="Milshina N.V."/>
            <person name="Mobarry C."/>
            <person name="Morris J."/>
            <person name="Moshrefi A."/>
            <person name="Mount S.M."/>
            <person name="Moy M."/>
            <person name="Murphy B."/>
            <person name="Murphy L."/>
            <person name="Muzny D.M."/>
            <person name="Nelson D.L."/>
            <person name="Nelson D.R."/>
            <person name="Nelson K.A."/>
            <person name="Nixon K."/>
            <person name="Nusskern D.R."/>
            <person name="Pacleb J.M."/>
            <person name="Palazzolo M."/>
            <person name="Pittman G.S."/>
            <person name="Pan S."/>
            <person name="Pollard J."/>
            <person name="Puri V."/>
            <person name="Reese M.G."/>
            <person name="Reinert K."/>
            <person name="Remington K."/>
            <person name="Saunders R.D.C."/>
            <person name="Scheeler F."/>
            <person name="Shen H."/>
            <person name="Shue B.C."/>
            <person name="Siden-Kiamos I."/>
            <person name="Simpson M."/>
            <person name="Skupski M.P."/>
            <person name="Smith T.J."/>
            <person name="Spier E."/>
            <person name="Spradling A.C."/>
            <person name="Stapleton M."/>
            <person name="Strong R."/>
            <person name="Sun E."/>
            <person name="Svirskas R."/>
            <person name="Tector C."/>
            <person name="Turner R."/>
            <person name="Venter E."/>
            <person name="Wang A.H."/>
            <person name="Wang X."/>
            <person name="Wang Z.-Y."/>
            <person name="Wassarman D.A."/>
            <person name="Weinstock G.M."/>
            <person name="Weissenbach J."/>
            <person name="Williams S.M."/>
            <person name="Woodage T."/>
            <person name="Worley K.C."/>
            <person name="Wu D."/>
            <person name="Yang S."/>
            <person name="Yao Q.A."/>
            <person name="Ye J."/>
            <person name="Yeh R.-F."/>
            <person name="Zaveri J.S."/>
            <person name="Zhan M."/>
            <person name="Zhang G."/>
            <person name="Zhao Q."/>
            <person name="Zheng L."/>
            <person name="Zheng X.H."/>
            <person name="Zhong F.N."/>
            <person name="Zhong W."/>
            <person name="Zhou X."/>
            <person name="Zhu S.C."/>
            <person name="Zhu X."/>
            <person name="Smith H.O."/>
            <person name="Gibbs R.A."/>
            <person name="Myers E.W."/>
            <person name="Rubin G.M."/>
            <person name="Venter J.C."/>
        </authorList>
    </citation>
    <scope>NUCLEOTIDE SEQUENCE [LARGE SCALE GENOMIC DNA]</scope>
    <source>
        <strain>Berkeley</strain>
    </source>
</reference>
<reference key="2">
    <citation type="journal article" date="2002" name="Genome Biol.">
        <title>Annotation of the Drosophila melanogaster euchromatic genome: a systematic review.</title>
        <authorList>
            <person name="Misra S."/>
            <person name="Crosby M.A."/>
            <person name="Mungall C.J."/>
            <person name="Matthews B.B."/>
            <person name="Campbell K.S."/>
            <person name="Hradecky P."/>
            <person name="Huang Y."/>
            <person name="Kaminker J.S."/>
            <person name="Millburn G.H."/>
            <person name="Prochnik S.E."/>
            <person name="Smith C.D."/>
            <person name="Tupy J.L."/>
            <person name="Whitfield E.J."/>
            <person name="Bayraktaroglu L."/>
            <person name="Berman B.P."/>
            <person name="Bettencourt B.R."/>
            <person name="Celniker S.E."/>
            <person name="de Grey A.D.N.J."/>
            <person name="Drysdale R.A."/>
            <person name="Harris N.L."/>
            <person name="Richter J."/>
            <person name="Russo S."/>
            <person name="Schroeder A.J."/>
            <person name="Shu S.Q."/>
            <person name="Stapleton M."/>
            <person name="Yamada C."/>
            <person name="Ashburner M."/>
            <person name="Gelbart W.M."/>
            <person name="Rubin G.M."/>
            <person name="Lewis S.E."/>
        </authorList>
    </citation>
    <scope>GENOME REANNOTATION</scope>
    <source>
        <strain>Berkeley</strain>
    </source>
</reference>
<reference key="3">
    <citation type="journal article" date="2002" name="Genome Biol.">
        <title>A Drosophila full-length cDNA resource.</title>
        <authorList>
            <person name="Stapleton M."/>
            <person name="Carlson J.W."/>
            <person name="Brokstein P."/>
            <person name="Yu C."/>
            <person name="Champe M."/>
            <person name="George R.A."/>
            <person name="Guarin H."/>
            <person name="Kronmiller B."/>
            <person name="Pacleb J.M."/>
            <person name="Park S."/>
            <person name="Wan K.H."/>
            <person name="Rubin G.M."/>
            <person name="Celniker S.E."/>
        </authorList>
    </citation>
    <scope>NUCLEOTIDE SEQUENCE [LARGE SCALE MRNA]</scope>
    <source>
        <strain>Berkeley</strain>
        <tissue>Embryo</tissue>
    </source>
</reference>
<reference key="4">
    <citation type="journal article" date="2001" name="Curr. Biol.">
        <title>An evolutionarily conserved function of the Drosophila insulin receptor and insulin-like peptides in growth control.</title>
        <authorList>
            <person name="Brogiolo W."/>
            <person name="Stocker H."/>
            <person name="Ikeya T."/>
            <person name="Rintelen F."/>
            <person name="Fernandez R."/>
            <person name="Hafen E."/>
        </authorList>
    </citation>
    <scope>IDENTIFICATION</scope>
    <scope>TISSUE SPECIFICITY</scope>
    <scope>DEVELOPMENTAL STAGE</scope>
</reference>
<evidence type="ECO:0000250" key="1"/>
<evidence type="ECO:0000255" key="2"/>
<evidence type="ECO:0000256" key="3">
    <source>
        <dbReference type="SAM" id="MobiDB-lite"/>
    </source>
</evidence>
<evidence type="ECO:0000269" key="4">
    <source>
    </source>
</evidence>
<evidence type="ECO:0000305" key="5"/>
<evidence type="ECO:0000312" key="6">
    <source>
        <dbReference type="FlyBase" id="FBgn0044049"/>
    </source>
</evidence>
<evidence type="ECO:0000312" key="7">
    <source>
        <dbReference type="Proteomes" id="UP000000803"/>
    </source>
</evidence>
<organism evidence="7">
    <name type="scientific">Drosophila melanogaster</name>
    <name type="common">Fruit fly</name>
    <dbReference type="NCBI Taxonomy" id="7227"/>
    <lineage>
        <taxon>Eukaryota</taxon>
        <taxon>Metazoa</taxon>
        <taxon>Ecdysozoa</taxon>
        <taxon>Arthropoda</taxon>
        <taxon>Hexapoda</taxon>
        <taxon>Insecta</taxon>
        <taxon>Pterygota</taxon>
        <taxon>Neoptera</taxon>
        <taxon>Endopterygota</taxon>
        <taxon>Diptera</taxon>
        <taxon>Brachycera</taxon>
        <taxon>Muscomorpha</taxon>
        <taxon>Ephydroidea</taxon>
        <taxon>Drosophilidae</taxon>
        <taxon>Drosophila</taxon>
        <taxon>Sophophora</taxon>
    </lineage>
</organism>
<gene>
    <name evidence="6" type="primary">Ilp4</name>
    <name evidence="6" type="ORF">CG6736</name>
</gene>
<dbReference type="EMBL" id="AE014296">
    <property type="protein sequence ID" value="AAF50202.1"/>
    <property type="molecule type" value="Genomic_DNA"/>
</dbReference>
<dbReference type="EMBL" id="AY071235">
    <property type="protein sequence ID" value="AAL48857.1"/>
    <property type="molecule type" value="mRNA"/>
</dbReference>
<dbReference type="RefSeq" id="NP_648361.1">
    <property type="nucleotide sequence ID" value="NM_140104.3"/>
</dbReference>
<dbReference type="BioGRID" id="64540">
    <property type="interactions" value="2"/>
</dbReference>
<dbReference type="FunCoup" id="Q9VT53">
    <property type="interactions" value="217"/>
</dbReference>
<dbReference type="IntAct" id="Q9VT53">
    <property type="interactions" value="2"/>
</dbReference>
<dbReference type="STRING" id="7227.FBpp0076101"/>
<dbReference type="PaxDb" id="7227-FBpp0076101"/>
<dbReference type="DNASU" id="39152"/>
<dbReference type="EnsemblMetazoa" id="FBtr0076372">
    <property type="protein sequence ID" value="FBpp0076101"/>
    <property type="gene ID" value="FBgn0044049"/>
</dbReference>
<dbReference type="GeneID" id="39152"/>
<dbReference type="KEGG" id="dme:Dmel_CG6736"/>
<dbReference type="AGR" id="FB:FBgn0044049"/>
<dbReference type="CTD" id="39152"/>
<dbReference type="FlyBase" id="FBgn0044049">
    <property type="gene designation" value="Ilp4"/>
</dbReference>
<dbReference type="VEuPathDB" id="VectorBase:FBgn0044049"/>
<dbReference type="eggNOG" id="ENOG502T8YM">
    <property type="taxonomic scope" value="Eukaryota"/>
</dbReference>
<dbReference type="HOGENOM" id="CLU_146931_0_0_1"/>
<dbReference type="InParanoid" id="Q9VT53"/>
<dbReference type="OMA" id="VNGFSHR"/>
<dbReference type="OrthoDB" id="10019596at2759"/>
<dbReference type="PhylomeDB" id="Q9VT53"/>
<dbReference type="Reactome" id="R-DME-110478">
    <property type="pathway name" value="Insulin signaling pathway"/>
</dbReference>
<dbReference type="Reactome" id="R-DME-418555">
    <property type="pathway name" value="G alpha (s) signalling events"/>
</dbReference>
<dbReference type="Reactome" id="R-DME-444821">
    <property type="pathway name" value="Relaxin receptors"/>
</dbReference>
<dbReference type="SignaLink" id="Q9VT53"/>
<dbReference type="BioGRID-ORCS" id="39152">
    <property type="hits" value="0 hits in 1 CRISPR screen"/>
</dbReference>
<dbReference type="GenomeRNAi" id="39152"/>
<dbReference type="PRO" id="PR:Q9VT53"/>
<dbReference type="Proteomes" id="UP000000803">
    <property type="component" value="Chromosome 3L"/>
</dbReference>
<dbReference type="Bgee" id="FBgn0044049">
    <property type="expression patterns" value="Expressed in mesoderm anlage and 25 other cell types or tissues"/>
</dbReference>
<dbReference type="ExpressionAtlas" id="Q9VT53">
    <property type="expression patterns" value="baseline and differential"/>
</dbReference>
<dbReference type="GO" id="GO:0005576">
    <property type="term" value="C:extracellular region"/>
    <property type="evidence" value="ECO:0000304"/>
    <property type="project" value="Reactome"/>
</dbReference>
<dbReference type="GO" id="GO:0005615">
    <property type="term" value="C:extracellular space"/>
    <property type="evidence" value="ECO:0000250"/>
    <property type="project" value="FlyBase"/>
</dbReference>
<dbReference type="GO" id="GO:0005179">
    <property type="term" value="F:hormone activity"/>
    <property type="evidence" value="ECO:0007669"/>
    <property type="project" value="InterPro"/>
</dbReference>
<dbReference type="GO" id="GO:0005158">
    <property type="term" value="F:insulin receptor binding"/>
    <property type="evidence" value="ECO:0000250"/>
    <property type="project" value="UniProtKB"/>
</dbReference>
<dbReference type="GO" id="GO:0007193">
    <property type="term" value="P:adenylate cyclase-inhibiting G protein-coupled receptor signaling pathway"/>
    <property type="evidence" value="ECO:0000318"/>
    <property type="project" value="GO_Central"/>
</dbReference>
<dbReference type="GO" id="GO:0008286">
    <property type="term" value="P:insulin receptor signaling pathway"/>
    <property type="evidence" value="ECO:0000250"/>
    <property type="project" value="UniProtKB"/>
</dbReference>
<dbReference type="GO" id="GO:0030536">
    <property type="term" value="P:larval feeding behavior"/>
    <property type="evidence" value="ECO:0000315"/>
    <property type="project" value="FlyBase"/>
</dbReference>
<dbReference type="Gene3D" id="1.10.100.10">
    <property type="entry name" value="Insulin-like"/>
    <property type="match status" value="1"/>
</dbReference>
<dbReference type="InterPro" id="IPR043387">
    <property type="entry name" value="INSL3/INSL4"/>
</dbReference>
<dbReference type="InterPro" id="IPR016179">
    <property type="entry name" value="Insulin-like"/>
</dbReference>
<dbReference type="InterPro" id="IPR036438">
    <property type="entry name" value="Insulin-like_sf"/>
</dbReference>
<dbReference type="InterPro" id="IPR022353">
    <property type="entry name" value="Insulin_CS"/>
</dbReference>
<dbReference type="InterPro" id="IPR022352">
    <property type="entry name" value="Insulin_family"/>
</dbReference>
<dbReference type="PANTHER" id="PTHR10423">
    <property type="entry name" value="INSULIN-LIKE 3"/>
    <property type="match status" value="1"/>
</dbReference>
<dbReference type="PANTHER" id="PTHR10423:SF3">
    <property type="entry name" value="INSULIN-LIKE 3"/>
    <property type="match status" value="1"/>
</dbReference>
<dbReference type="Pfam" id="PF00049">
    <property type="entry name" value="Insulin"/>
    <property type="match status" value="1"/>
</dbReference>
<dbReference type="PRINTS" id="PR00276">
    <property type="entry name" value="INSULINFAMLY"/>
</dbReference>
<dbReference type="SMART" id="SM00078">
    <property type="entry name" value="IlGF"/>
    <property type="match status" value="1"/>
</dbReference>
<dbReference type="SUPFAM" id="SSF56994">
    <property type="entry name" value="Insulin-like"/>
    <property type="match status" value="1"/>
</dbReference>
<dbReference type="PROSITE" id="PS00262">
    <property type="entry name" value="INSULIN"/>
    <property type="match status" value="1"/>
</dbReference>
<sequence>MSLIRLGLALLLLLATVSQLLQPVQGRRKMCGEALIQALDVICVNGFTRRVRRSSASKDARVRDLIRKLQQPDEDIEQETETGRLKQKHTDADTEKGVPPAVGSGRKLRRHRRRIAHECCKEGCTYDDILDYCA</sequence>
<protein>
    <recommendedName>
        <fullName evidence="6">Insulin-like peptide 4</fullName>
        <shortName>dILP4</shortName>
    </recommendedName>
    <alternativeName>
        <fullName>Insulin-related peptide 4</fullName>
    </alternativeName>
    <component>
        <recommendedName>
            <fullName>Insulin-like peptide 4 A chain</fullName>
        </recommendedName>
    </component>
    <component>
        <recommendedName>
            <fullName>Insulin-like peptide 4 B chain</fullName>
        </recommendedName>
    </component>
</protein>